<organism>
    <name type="scientific">Homo sapiens</name>
    <name type="common">Human</name>
    <dbReference type="NCBI Taxonomy" id="9606"/>
    <lineage>
        <taxon>Eukaryota</taxon>
        <taxon>Metazoa</taxon>
        <taxon>Chordata</taxon>
        <taxon>Craniata</taxon>
        <taxon>Vertebrata</taxon>
        <taxon>Euteleostomi</taxon>
        <taxon>Mammalia</taxon>
        <taxon>Eutheria</taxon>
        <taxon>Euarchontoglires</taxon>
        <taxon>Primates</taxon>
        <taxon>Haplorrhini</taxon>
        <taxon>Catarrhini</taxon>
        <taxon>Hominidae</taxon>
        <taxon>Homo</taxon>
    </lineage>
</organism>
<gene>
    <name type="primary">CCDC77</name>
</gene>
<keyword id="KW-0025">Alternative splicing</keyword>
<keyword id="KW-0175">Coiled coil</keyword>
<keyword id="KW-1017">Isopeptide bond</keyword>
<keyword id="KW-0597">Phosphoprotein</keyword>
<keyword id="KW-1267">Proteomics identification</keyword>
<keyword id="KW-1185">Reference proteome</keyword>
<keyword id="KW-0832">Ubl conjugation</keyword>
<protein>
    <recommendedName>
        <fullName>Coiled-coil domain-containing protein 77</fullName>
    </recommendedName>
</protein>
<feature type="chain" id="PRO_0000271003" description="Coiled-coil domain-containing protein 77">
    <location>
        <begin position="1"/>
        <end position="488"/>
    </location>
</feature>
<feature type="region of interest" description="Disordered" evidence="3">
    <location>
        <begin position="21"/>
        <end position="48"/>
    </location>
</feature>
<feature type="region of interest" description="Disordered" evidence="3">
    <location>
        <begin position="192"/>
        <end position="213"/>
    </location>
</feature>
<feature type="coiled-coil region" evidence="2">
    <location>
        <begin position="55"/>
        <end position="118"/>
    </location>
</feature>
<feature type="coiled-coil region" evidence="2">
    <location>
        <begin position="208"/>
        <end position="488"/>
    </location>
</feature>
<feature type="modified residue" description="Phosphoserine" evidence="1">
    <location>
        <position position="36"/>
    </location>
</feature>
<feature type="cross-link" description="Glycyl lysine isopeptide (Lys-Gly) (interchain with G-Cter in SUMO2)" evidence="5">
    <location>
        <position position="51"/>
    </location>
</feature>
<feature type="splice variant" id="VSP_043135" description="In isoform 2." evidence="4">
    <location>
        <begin position="1"/>
        <end position="32"/>
    </location>
</feature>
<feature type="sequence variant" id="VAR_029838" description="In dbSNP:rs4980895.">
    <original>S</original>
    <variation>R</variation>
    <location>
        <position position="25"/>
    </location>
</feature>
<feature type="sequence variant" id="VAR_029839" description="In dbSNP:rs735295.">
    <original>M</original>
    <variation>T</variation>
    <location>
        <position position="335"/>
    </location>
</feature>
<name>CCD77_HUMAN</name>
<sequence>MNFTPTHTPVCRKRTVVSKRGVAVSGPTKRRGMADSLESTPLPSPEDRLAKLHPSKELLEYYQKKMAECEAENEDLLKKLELYKEACEGQHKLECDLQQREEEIAELQKALSDMQVCLFQEREHVLRLYSENDRLRIRELEDKKKIQNLLALVGTDAGEVTYFCKEPPHKVTILQKTIQAVGECEQSESSAFKADPKISKRRPSRERKESSEHYQRDIQTLILQVEALQAQLGEQTKLSREQIEGLIEDRRIHLEEIQVQHQRNQNKIKELTKNLHHTQELLYESTKDFLQLRSENQNKEKSWMLEKDNLMSKIKQYRVQCKKKEDKIGKVLPVMHESHHAQSEYIKSLKDKLVQEKKLSNMYQEQCISLEEELARIREEEGMRREIFKDRTNKMGKRLQIMTKRYEALERRRILEVEGFKTDIKVLRQKLKDLEQMLYKATVNARANQDLALLCEVRDSNRRAHKIQGELKNLKSKVFGLENELRLC</sequence>
<evidence type="ECO:0000250" key="1">
    <source>
        <dbReference type="UniProtKB" id="Q9CZH8"/>
    </source>
</evidence>
<evidence type="ECO:0000255" key="2"/>
<evidence type="ECO:0000256" key="3">
    <source>
        <dbReference type="SAM" id="MobiDB-lite"/>
    </source>
</evidence>
<evidence type="ECO:0000303" key="4">
    <source>
    </source>
</evidence>
<evidence type="ECO:0007744" key="5">
    <source>
    </source>
</evidence>
<reference key="1">
    <citation type="journal article" date="2004" name="Nat. Genet.">
        <title>Complete sequencing and characterization of 21,243 full-length human cDNAs.</title>
        <authorList>
            <person name="Ota T."/>
            <person name="Suzuki Y."/>
            <person name="Nishikawa T."/>
            <person name="Otsuki T."/>
            <person name="Sugiyama T."/>
            <person name="Irie R."/>
            <person name="Wakamatsu A."/>
            <person name="Hayashi K."/>
            <person name="Sato H."/>
            <person name="Nagai K."/>
            <person name="Kimura K."/>
            <person name="Makita H."/>
            <person name="Sekine M."/>
            <person name="Obayashi M."/>
            <person name="Nishi T."/>
            <person name="Shibahara T."/>
            <person name="Tanaka T."/>
            <person name="Ishii S."/>
            <person name="Yamamoto J."/>
            <person name="Saito K."/>
            <person name="Kawai Y."/>
            <person name="Isono Y."/>
            <person name="Nakamura Y."/>
            <person name="Nagahari K."/>
            <person name="Murakami K."/>
            <person name="Yasuda T."/>
            <person name="Iwayanagi T."/>
            <person name="Wagatsuma M."/>
            <person name="Shiratori A."/>
            <person name="Sudo H."/>
            <person name="Hosoiri T."/>
            <person name="Kaku Y."/>
            <person name="Kodaira H."/>
            <person name="Kondo H."/>
            <person name="Sugawara M."/>
            <person name="Takahashi M."/>
            <person name="Kanda K."/>
            <person name="Yokoi T."/>
            <person name="Furuya T."/>
            <person name="Kikkawa E."/>
            <person name="Omura Y."/>
            <person name="Abe K."/>
            <person name="Kamihara K."/>
            <person name="Katsuta N."/>
            <person name="Sato K."/>
            <person name="Tanikawa M."/>
            <person name="Yamazaki M."/>
            <person name="Ninomiya K."/>
            <person name="Ishibashi T."/>
            <person name="Yamashita H."/>
            <person name="Murakawa K."/>
            <person name="Fujimori K."/>
            <person name="Tanai H."/>
            <person name="Kimata M."/>
            <person name="Watanabe M."/>
            <person name="Hiraoka S."/>
            <person name="Chiba Y."/>
            <person name="Ishida S."/>
            <person name="Ono Y."/>
            <person name="Takiguchi S."/>
            <person name="Watanabe S."/>
            <person name="Yosida M."/>
            <person name="Hotuta T."/>
            <person name="Kusano J."/>
            <person name="Kanehori K."/>
            <person name="Takahashi-Fujii A."/>
            <person name="Hara H."/>
            <person name="Tanase T.-O."/>
            <person name="Nomura Y."/>
            <person name="Togiya S."/>
            <person name="Komai F."/>
            <person name="Hara R."/>
            <person name="Takeuchi K."/>
            <person name="Arita M."/>
            <person name="Imose N."/>
            <person name="Musashino K."/>
            <person name="Yuuki H."/>
            <person name="Oshima A."/>
            <person name="Sasaki N."/>
            <person name="Aotsuka S."/>
            <person name="Yoshikawa Y."/>
            <person name="Matsunawa H."/>
            <person name="Ichihara T."/>
            <person name="Shiohata N."/>
            <person name="Sano S."/>
            <person name="Moriya S."/>
            <person name="Momiyama H."/>
            <person name="Satoh N."/>
            <person name="Takami S."/>
            <person name="Terashima Y."/>
            <person name="Suzuki O."/>
            <person name="Nakagawa S."/>
            <person name="Senoh A."/>
            <person name="Mizoguchi H."/>
            <person name="Goto Y."/>
            <person name="Shimizu F."/>
            <person name="Wakebe H."/>
            <person name="Hishigaki H."/>
            <person name="Watanabe T."/>
            <person name="Sugiyama A."/>
            <person name="Takemoto M."/>
            <person name="Kawakami B."/>
            <person name="Yamazaki M."/>
            <person name="Watanabe K."/>
            <person name="Kumagai A."/>
            <person name="Itakura S."/>
            <person name="Fukuzumi Y."/>
            <person name="Fujimori Y."/>
            <person name="Komiyama M."/>
            <person name="Tashiro H."/>
            <person name="Tanigami A."/>
            <person name="Fujiwara T."/>
            <person name="Ono T."/>
            <person name="Yamada K."/>
            <person name="Fujii Y."/>
            <person name="Ozaki K."/>
            <person name="Hirao M."/>
            <person name="Ohmori Y."/>
            <person name="Kawabata A."/>
            <person name="Hikiji T."/>
            <person name="Kobatake N."/>
            <person name="Inagaki H."/>
            <person name="Ikema Y."/>
            <person name="Okamoto S."/>
            <person name="Okitani R."/>
            <person name="Kawakami T."/>
            <person name="Noguchi S."/>
            <person name="Itoh T."/>
            <person name="Shigeta K."/>
            <person name="Senba T."/>
            <person name="Matsumura K."/>
            <person name="Nakajima Y."/>
            <person name="Mizuno T."/>
            <person name="Morinaga M."/>
            <person name="Sasaki M."/>
            <person name="Togashi T."/>
            <person name="Oyama M."/>
            <person name="Hata H."/>
            <person name="Watanabe M."/>
            <person name="Komatsu T."/>
            <person name="Mizushima-Sugano J."/>
            <person name="Satoh T."/>
            <person name="Shirai Y."/>
            <person name="Takahashi Y."/>
            <person name="Nakagawa K."/>
            <person name="Okumura K."/>
            <person name="Nagase T."/>
            <person name="Nomura N."/>
            <person name="Kikuchi H."/>
            <person name="Masuho Y."/>
            <person name="Yamashita R."/>
            <person name="Nakai K."/>
            <person name="Yada T."/>
            <person name="Nakamura Y."/>
            <person name="Ohara O."/>
            <person name="Isogai T."/>
            <person name="Sugano S."/>
        </authorList>
    </citation>
    <scope>NUCLEOTIDE SEQUENCE [LARGE SCALE MRNA] (ISOFORMS 1 AND 2)</scope>
    <source>
        <tissue>Caudate nucleus</tissue>
    </source>
</reference>
<reference key="2">
    <citation type="journal article" date="2006" name="Nature">
        <title>The finished DNA sequence of human chromosome 12.</title>
        <authorList>
            <person name="Scherer S.E."/>
            <person name="Muzny D.M."/>
            <person name="Buhay C.J."/>
            <person name="Chen R."/>
            <person name="Cree A."/>
            <person name="Ding Y."/>
            <person name="Dugan-Rocha S."/>
            <person name="Gill R."/>
            <person name="Gunaratne P."/>
            <person name="Harris R.A."/>
            <person name="Hawes A.C."/>
            <person name="Hernandez J."/>
            <person name="Hodgson A.V."/>
            <person name="Hume J."/>
            <person name="Jackson A."/>
            <person name="Khan Z.M."/>
            <person name="Kovar-Smith C."/>
            <person name="Lewis L.R."/>
            <person name="Lozado R.J."/>
            <person name="Metzker M.L."/>
            <person name="Milosavljevic A."/>
            <person name="Miner G.R."/>
            <person name="Montgomery K.T."/>
            <person name="Morgan M.B."/>
            <person name="Nazareth L.V."/>
            <person name="Scott G."/>
            <person name="Sodergren E."/>
            <person name="Song X.-Z."/>
            <person name="Steffen D."/>
            <person name="Lovering R.C."/>
            <person name="Wheeler D.A."/>
            <person name="Worley K.C."/>
            <person name="Yuan Y."/>
            <person name="Zhang Z."/>
            <person name="Adams C.Q."/>
            <person name="Ansari-Lari M.A."/>
            <person name="Ayele M."/>
            <person name="Brown M.J."/>
            <person name="Chen G."/>
            <person name="Chen Z."/>
            <person name="Clerc-Blankenburg K.P."/>
            <person name="Davis C."/>
            <person name="Delgado O."/>
            <person name="Dinh H.H."/>
            <person name="Draper H."/>
            <person name="Gonzalez-Garay M.L."/>
            <person name="Havlak P."/>
            <person name="Jackson L.R."/>
            <person name="Jacob L.S."/>
            <person name="Kelly S.H."/>
            <person name="Li L."/>
            <person name="Li Z."/>
            <person name="Liu J."/>
            <person name="Liu W."/>
            <person name="Lu J."/>
            <person name="Maheshwari M."/>
            <person name="Nguyen B.-V."/>
            <person name="Okwuonu G.O."/>
            <person name="Pasternak S."/>
            <person name="Perez L.M."/>
            <person name="Plopper F.J.H."/>
            <person name="Santibanez J."/>
            <person name="Shen H."/>
            <person name="Tabor P.E."/>
            <person name="Verduzco D."/>
            <person name="Waldron L."/>
            <person name="Wang Q."/>
            <person name="Williams G.A."/>
            <person name="Zhang J."/>
            <person name="Zhou J."/>
            <person name="Allen C.C."/>
            <person name="Amin A.G."/>
            <person name="Anyalebechi V."/>
            <person name="Bailey M."/>
            <person name="Barbaria J.A."/>
            <person name="Bimage K.E."/>
            <person name="Bryant N.P."/>
            <person name="Burch P.E."/>
            <person name="Burkett C.E."/>
            <person name="Burrell K.L."/>
            <person name="Calderon E."/>
            <person name="Cardenas V."/>
            <person name="Carter K."/>
            <person name="Casias K."/>
            <person name="Cavazos I."/>
            <person name="Cavazos S.R."/>
            <person name="Ceasar H."/>
            <person name="Chacko J."/>
            <person name="Chan S.N."/>
            <person name="Chavez D."/>
            <person name="Christopoulos C."/>
            <person name="Chu J."/>
            <person name="Cockrell R."/>
            <person name="Cox C.D."/>
            <person name="Dang M."/>
            <person name="Dathorne S.R."/>
            <person name="David R."/>
            <person name="Davis C.M."/>
            <person name="Davy-Carroll L."/>
            <person name="Deshazo D.R."/>
            <person name="Donlin J.E."/>
            <person name="D'Souza L."/>
            <person name="Eaves K.A."/>
            <person name="Egan A."/>
            <person name="Emery-Cohen A.J."/>
            <person name="Escotto M."/>
            <person name="Flagg N."/>
            <person name="Forbes L.D."/>
            <person name="Gabisi A.M."/>
            <person name="Garza M."/>
            <person name="Hamilton C."/>
            <person name="Henderson N."/>
            <person name="Hernandez O."/>
            <person name="Hines S."/>
            <person name="Hogues M.E."/>
            <person name="Huang M."/>
            <person name="Idlebird D.G."/>
            <person name="Johnson R."/>
            <person name="Jolivet A."/>
            <person name="Jones S."/>
            <person name="Kagan R."/>
            <person name="King L.M."/>
            <person name="Leal B."/>
            <person name="Lebow H."/>
            <person name="Lee S."/>
            <person name="LeVan J.M."/>
            <person name="Lewis L.C."/>
            <person name="London P."/>
            <person name="Lorensuhewa L.M."/>
            <person name="Loulseged H."/>
            <person name="Lovett D.A."/>
            <person name="Lucier A."/>
            <person name="Lucier R.L."/>
            <person name="Ma J."/>
            <person name="Madu R.C."/>
            <person name="Mapua P."/>
            <person name="Martindale A.D."/>
            <person name="Martinez E."/>
            <person name="Massey E."/>
            <person name="Mawhiney S."/>
            <person name="Meador M.G."/>
            <person name="Mendez S."/>
            <person name="Mercado C."/>
            <person name="Mercado I.C."/>
            <person name="Merritt C.E."/>
            <person name="Miner Z.L."/>
            <person name="Minja E."/>
            <person name="Mitchell T."/>
            <person name="Mohabbat F."/>
            <person name="Mohabbat K."/>
            <person name="Montgomery B."/>
            <person name="Moore N."/>
            <person name="Morris S."/>
            <person name="Munidasa M."/>
            <person name="Ngo R.N."/>
            <person name="Nguyen N.B."/>
            <person name="Nickerson E."/>
            <person name="Nwaokelemeh O.O."/>
            <person name="Nwokenkwo S."/>
            <person name="Obregon M."/>
            <person name="Oguh M."/>
            <person name="Oragunye N."/>
            <person name="Oviedo R.J."/>
            <person name="Parish B.J."/>
            <person name="Parker D.N."/>
            <person name="Parrish J."/>
            <person name="Parks K.L."/>
            <person name="Paul H.A."/>
            <person name="Payton B.A."/>
            <person name="Perez A."/>
            <person name="Perrin W."/>
            <person name="Pickens A."/>
            <person name="Primus E.L."/>
            <person name="Pu L.-L."/>
            <person name="Puazo M."/>
            <person name="Quiles M.M."/>
            <person name="Quiroz J.B."/>
            <person name="Rabata D."/>
            <person name="Reeves K."/>
            <person name="Ruiz S.J."/>
            <person name="Shao H."/>
            <person name="Sisson I."/>
            <person name="Sonaike T."/>
            <person name="Sorelle R.P."/>
            <person name="Sutton A.E."/>
            <person name="Svatek A.F."/>
            <person name="Svetz L.A."/>
            <person name="Tamerisa K.S."/>
            <person name="Taylor T.R."/>
            <person name="Teague B."/>
            <person name="Thomas N."/>
            <person name="Thorn R.D."/>
            <person name="Trejos Z.Y."/>
            <person name="Trevino B.K."/>
            <person name="Ukegbu O.N."/>
            <person name="Urban J.B."/>
            <person name="Vasquez L.I."/>
            <person name="Vera V.A."/>
            <person name="Villasana D.M."/>
            <person name="Wang L."/>
            <person name="Ward-Moore S."/>
            <person name="Warren J.T."/>
            <person name="Wei X."/>
            <person name="White F."/>
            <person name="Williamson A.L."/>
            <person name="Wleczyk R."/>
            <person name="Wooden H.S."/>
            <person name="Wooden S.H."/>
            <person name="Yen J."/>
            <person name="Yoon L."/>
            <person name="Yoon V."/>
            <person name="Zorrilla S.E."/>
            <person name="Nelson D."/>
            <person name="Kucherlapati R."/>
            <person name="Weinstock G."/>
            <person name="Gibbs R.A."/>
        </authorList>
    </citation>
    <scope>NUCLEOTIDE SEQUENCE [LARGE SCALE GENOMIC DNA]</scope>
</reference>
<reference key="3">
    <citation type="submission" date="2005-09" db="EMBL/GenBank/DDBJ databases">
        <authorList>
            <person name="Mural R.J."/>
            <person name="Istrail S."/>
            <person name="Sutton G."/>
            <person name="Florea L."/>
            <person name="Halpern A.L."/>
            <person name="Mobarry C.M."/>
            <person name="Lippert R."/>
            <person name="Walenz B."/>
            <person name="Shatkay H."/>
            <person name="Dew I."/>
            <person name="Miller J.R."/>
            <person name="Flanigan M.J."/>
            <person name="Edwards N.J."/>
            <person name="Bolanos R."/>
            <person name="Fasulo D."/>
            <person name="Halldorsson B.V."/>
            <person name="Hannenhalli S."/>
            <person name="Turner R."/>
            <person name="Yooseph S."/>
            <person name="Lu F."/>
            <person name="Nusskern D.R."/>
            <person name="Shue B.C."/>
            <person name="Zheng X.H."/>
            <person name="Zhong F."/>
            <person name="Delcher A.L."/>
            <person name="Huson D.H."/>
            <person name="Kravitz S.A."/>
            <person name="Mouchard L."/>
            <person name="Reinert K."/>
            <person name="Remington K.A."/>
            <person name="Clark A.G."/>
            <person name="Waterman M.S."/>
            <person name="Eichler E.E."/>
            <person name="Adams M.D."/>
            <person name="Hunkapiller M.W."/>
            <person name="Myers E.W."/>
            <person name="Venter J.C."/>
        </authorList>
    </citation>
    <scope>NUCLEOTIDE SEQUENCE [LARGE SCALE GENOMIC DNA]</scope>
</reference>
<reference key="4">
    <citation type="journal article" date="2004" name="Genome Res.">
        <title>The status, quality, and expansion of the NIH full-length cDNA project: the Mammalian Gene Collection (MGC).</title>
        <authorList>
            <consortium name="The MGC Project Team"/>
        </authorList>
    </citation>
    <scope>NUCLEOTIDE SEQUENCE [LARGE SCALE MRNA] (ISOFORM 1)</scope>
    <source>
        <tissue>Skin</tissue>
    </source>
</reference>
<reference key="5">
    <citation type="journal article" date="2003" name="Nature">
        <title>Proteomic characterization of the human centrosome by protein correlation profiling.</title>
        <authorList>
            <person name="Andersen J.S."/>
            <person name="Wilkinson C.J."/>
            <person name="Mayor T."/>
            <person name="Mortensen P."/>
            <person name="Nigg E.A."/>
            <person name="Mann M."/>
        </authorList>
    </citation>
    <scope>IDENTIFICATION BY MASS SPECTROMETRY</scope>
    <source>
        <tissue>Lymphoblast</tissue>
    </source>
</reference>
<reference key="6">
    <citation type="journal article" date="2017" name="Nat. Struct. Mol. Biol.">
        <title>Site-specific mapping of the human SUMO proteome reveals co-modification with phosphorylation.</title>
        <authorList>
            <person name="Hendriks I.A."/>
            <person name="Lyon D."/>
            <person name="Young C."/>
            <person name="Jensen L.J."/>
            <person name="Vertegaal A.C."/>
            <person name="Nielsen M.L."/>
        </authorList>
    </citation>
    <scope>SUMOYLATION [LARGE SCALE ANALYSIS] AT LYS-51</scope>
    <scope>IDENTIFICATION BY MASS SPECTROMETRY [LARGE SCALE ANALYSIS]</scope>
</reference>
<proteinExistence type="evidence at protein level"/>
<comment type="alternative products">
    <event type="alternative splicing"/>
    <isoform>
        <id>Q9BR77-1</id>
        <name>1</name>
        <sequence type="displayed"/>
    </isoform>
    <isoform>
        <id>Q9BR77-2</id>
        <name>2</name>
        <sequence type="described" ref="VSP_043135"/>
    </isoform>
</comment>
<dbReference type="EMBL" id="AK027638">
    <property type="protein sequence ID" value="BAB55255.1"/>
    <property type="molecule type" value="mRNA"/>
</dbReference>
<dbReference type="EMBL" id="AK293165">
    <property type="protein sequence ID" value="BAG56709.1"/>
    <property type="molecule type" value="mRNA"/>
</dbReference>
<dbReference type="EMBL" id="AK316029">
    <property type="protein sequence ID" value="BAH14400.1"/>
    <property type="molecule type" value="mRNA"/>
</dbReference>
<dbReference type="EMBL" id="AC005844">
    <property type="status" value="NOT_ANNOTATED_CDS"/>
    <property type="molecule type" value="Genomic_DNA"/>
</dbReference>
<dbReference type="EMBL" id="CH471116">
    <property type="protein sequence ID" value="EAW88967.1"/>
    <property type="molecule type" value="Genomic_DNA"/>
</dbReference>
<dbReference type="EMBL" id="BC006444">
    <property type="protein sequence ID" value="AAH06444.1"/>
    <property type="molecule type" value="mRNA"/>
</dbReference>
<dbReference type="CCDS" id="CCDS44781.1">
    <molecule id="Q9BR77-2"/>
</dbReference>
<dbReference type="CCDS" id="CCDS8503.1">
    <molecule id="Q9BR77-1"/>
</dbReference>
<dbReference type="RefSeq" id="NP_001123618.1">
    <molecule id="Q9BR77-2"/>
    <property type="nucleotide sequence ID" value="NM_001130146.2"/>
</dbReference>
<dbReference type="RefSeq" id="NP_001123619.1">
    <molecule id="Q9BR77-2"/>
    <property type="nucleotide sequence ID" value="NM_001130147.2"/>
</dbReference>
<dbReference type="RefSeq" id="NP_001123620.1">
    <molecule id="Q9BR77-2"/>
    <property type="nucleotide sequence ID" value="NM_001130148.2"/>
</dbReference>
<dbReference type="RefSeq" id="NP_115734.1">
    <molecule id="Q9BR77-1"/>
    <property type="nucleotide sequence ID" value="NM_032358.4"/>
</dbReference>
<dbReference type="SMR" id="Q9BR77"/>
<dbReference type="BioGRID" id="124044">
    <property type="interactions" value="83"/>
</dbReference>
<dbReference type="FunCoup" id="Q9BR77">
    <property type="interactions" value="1112"/>
</dbReference>
<dbReference type="IntAct" id="Q9BR77">
    <property type="interactions" value="58"/>
</dbReference>
<dbReference type="MINT" id="Q9BR77"/>
<dbReference type="STRING" id="9606.ENSP00000239830"/>
<dbReference type="iPTMnet" id="Q9BR77"/>
<dbReference type="PhosphoSitePlus" id="Q9BR77"/>
<dbReference type="BioMuta" id="CCDC77"/>
<dbReference type="DMDM" id="74732846"/>
<dbReference type="jPOST" id="Q9BR77"/>
<dbReference type="MassIVE" id="Q9BR77"/>
<dbReference type="PaxDb" id="9606-ENSP00000239830"/>
<dbReference type="PeptideAtlas" id="Q9BR77"/>
<dbReference type="ProteomicsDB" id="78747">
    <molecule id="Q9BR77-1"/>
</dbReference>
<dbReference type="ProteomicsDB" id="78748">
    <molecule id="Q9BR77-2"/>
</dbReference>
<dbReference type="Pumba" id="Q9BR77"/>
<dbReference type="Antibodypedia" id="50661">
    <property type="antibodies" value="13 antibodies from 10 providers"/>
</dbReference>
<dbReference type="DNASU" id="84318"/>
<dbReference type="Ensembl" id="ENST00000239830.9">
    <molecule id="Q9BR77-1"/>
    <property type="protein sequence ID" value="ENSP00000239830.4"/>
    <property type="gene ID" value="ENSG00000120647.10"/>
</dbReference>
<dbReference type="Ensembl" id="ENST00000412006.6">
    <molecule id="Q9BR77-2"/>
    <property type="protein sequence ID" value="ENSP00000412925.2"/>
    <property type="gene ID" value="ENSG00000120647.10"/>
</dbReference>
<dbReference type="Ensembl" id="ENST00000422000.5">
    <molecule id="Q9BR77-2"/>
    <property type="protein sequence ID" value="ENSP00000391870.1"/>
    <property type="gene ID" value="ENSG00000120647.10"/>
</dbReference>
<dbReference type="Ensembl" id="ENST00000540180.5">
    <molecule id="Q9BR77-2"/>
    <property type="protein sequence ID" value="ENSP00000440554.1"/>
    <property type="gene ID" value="ENSG00000120647.10"/>
</dbReference>
<dbReference type="GeneID" id="84318"/>
<dbReference type="KEGG" id="hsa:84318"/>
<dbReference type="MANE-Select" id="ENST00000239830.9">
    <property type="protein sequence ID" value="ENSP00000239830.4"/>
    <property type="RefSeq nucleotide sequence ID" value="NM_032358.4"/>
    <property type="RefSeq protein sequence ID" value="NP_115734.1"/>
</dbReference>
<dbReference type="UCSC" id="uc001qig.4">
    <molecule id="Q9BR77-1"/>
    <property type="organism name" value="human"/>
</dbReference>
<dbReference type="AGR" id="HGNC:28203"/>
<dbReference type="CTD" id="84318"/>
<dbReference type="DisGeNET" id="84318"/>
<dbReference type="GeneCards" id="CCDC77"/>
<dbReference type="HGNC" id="HGNC:28203">
    <property type="gene designation" value="CCDC77"/>
</dbReference>
<dbReference type="HPA" id="ENSG00000120647">
    <property type="expression patterns" value="Low tissue specificity"/>
</dbReference>
<dbReference type="neXtProt" id="NX_Q9BR77"/>
<dbReference type="OpenTargets" id="ENSG00000120647"/>
<dbReference type="PharmGKB" id="PA143485429"/>
<dbReference type="VEuPathDB" id="HostDB:ENSG00000120647"/>
<dbReference type="eggNOG" id="ENOG502QT8A">
    <property type="taxonomic scope" value="Eukaryota"/>
</dbReference>
<dbReference type="GeneTree" id="ENSGT00390000010251"/>
<dbReference type="HOGENOM" id="CLU_035281_0_0_1"/>
<dbReference type="InParanoid" id="Q9BR77"/>
<dbReference type="OMA" id="HLSHMYR"/>
<dbReference type="OrthoDB" id="191169at2759"/>
<dbReference type="PAN-GO" id="Q9BR77">
    <property type="GO annotations" value="1 GO annotation based on evolutionary models"/>
</dbReference>
<dbReference type="PhylomeDB" id="Q9BR77"/>
<dbReference type="TreeFam" id="TF329022"/>
<dbReference type="PathwayCommons" id="Q9BR77"/>
<dbReference type="SignaLink" id="Q9BR77"/>
<dbReference type="BioGRID-ORCS" id="84318">
    <property type="hits" value="33 hits in 1159 CRISPR screens"/>
</dbReference>
<dbReference type="CD-CODE" id="8C2F96ED">
    <property type="entry name" value="Centrosome"/>
</dbReference>
<dbReference type="ChiTaRS" id="CCDC77">
    <property type="organism name" value="human"/>
</dbReference>
<dbReference type="GenomeRNAi" id="84318"/>
<dbReference type="Pharos" id="Q9BR77">
    <property type="development level" value="Tdark"/>
</dbReference>
<dbReference type="PRO" id="PR:Q9BR77"/>
<dbReference type="Proteomes" id="UP000005640">
    <property type="component" value="Chromosome 12"/>
</dbReference>
<dbReference type="RNAct" id="Q9BR77">
    <property type="molecule type" value="protein"/>
</dbReference>
<dbReference type="Bgee" id="ENSG00000120647">
    <property type="expression patterns" value="Expressed in oocyte and 127 other cell types or tissues"/>
</dbReference>
<dbReference type="ExpressionAtlas" id="Q9BR77">
    <property type="expression patterns" value="baseline and differential"/>
</dbReference>
<dbReference type="GO" id="GO:0005813">
    <property type="term" value="C:centrosome"/>
    <property type="evidence" value="ECO:0000314"/>
    <property type="project" value="UniProtKB"/>
</dbReference>
<dbReference type="GO" id="GO:0016020">
    <property type="term" value="C:membrane"/>
    <property type="evidence" value="ECO:0007005"/>
    <property type="project" value="UniProtKB"/>
</dbReference>
<dbReference type="InterPro" id="IPR037696">
    <property type="entry name" value="CCDC77"/>
</dbReference>
<dbReference type="PANTHER" id="PTHR22091">
    <property type="entry name" value="COILED-COIL DOMAIN-CONTAINING PROTEIN 77"/>
    <property type="match status" value="1"/>
</dbReference>
<dbReference type="PANTHER" id="PTHR22091:SF1">
    <property type="entry name" value="COILED-COIL DOMAIN-CONTAINING PROTEIN 77"/>
    <property type="match status" value="1"/>
</dbReference>
<accession>Q9BR77</accession>
<accession>B4DDE8</accession>